<gene>
    <name type="primary">PHYA</name>
    <name type="synonym">PHY18</name>
    <name type="ordered locus">Os03g0719800</name>
    <name type="ordered locus">LOC_Os03g51030</name>
    <name type="ORF">B1377B10.8</name>
    <name type="ORF">OAJNBa0031O09.11</name>
    <name type="ORF">OsJ_011877</name>
</gene>
<evidence type="ECO:0000250" key="1"/>
<evidence type="ECO:0000255" key="2">
    <source>
        <dbReference type="PROSITE-ProRule" id="PRU00107"/>
    </source>
</evidence>
<evidence type="ECO:0000255" key="3">
    <source>
        <dbReference type="PROSITE-ProRule" id="PRU00140"/>
    </source>
</evidence>
<evidence type="ECO:0000256" key="4">
    <source>
        <dbReference type="SAM" id="MobiDB-lite"/>
    </source>
</evidence>
<evidence type="ECO:0000305" key="5"/>
<keyword id="KW-0157">Chromophore</keyword>
<keyword id="KW-0600">Photoreceptor protein</keyword>
<keyword id="KW-0675">Receptor</keyword>
<keyword id="KW-1185">Reference proteome</keyword>
<keyword id="KW-0677">Repeat</keyword>
<keyword id="KW-0716">Sensory transduction</keyword>
<keyword id="KW-0804">Transcription</keyword>
<keyword id="KW-0805">Transcription regulation</keyword>
<name>PHYA_ORYSJ</name>
<sequence length="1128" mass="125289">MSSSRPTQCSSSSSRTRQSSRARILAQTTLDAELNAEYEEYGDSFDYSKLVEAQRTTGPEQQARSEKVIAYLHHIQRAKLIQPFGCLLALDEKTFNVIALSENAPEMLTTVSHAVPSVDDPPKLRIGTNVWSLFTDPGATALQKALGFADVSLLNPILVQCKTSGKPFYAIVHRATGCLVVDFEPVKPTEFPATAAGALQSYKLAAKAISKIQSLPGGSMEVLCNTVVKELFDLTGYDRVMAYKFHEDDHGEVFAEITKPGLEPYLGLHYPATDIPQAARFLFMKNKVRMICDCRARSIKIIEDESLHLDISLCGSTLRAPHSCHLQYMENMNSIASLVMAVVVNENEDDDEVGADQPAQQQKRKKLWGLLVCHHESPRYVPFPLRYACEFLAQVFAVHVNKEFELERQVREKSILRMQTMLSDMLLRESSPLSIVSGTPNIMDLVKCDGAALLYGGKVWRLQNAPTESQIRDIAFWLSDVHRDSTGLSTDSLHDAGYPGAAALGDMICGMAVAKINSKDILFWFRSHTAAEIRWGGAKHDPSDKDDSRRMHPRLSFKAFLEVVKMKSLPWNDYEMDAIHSLQLILRGTLNDDIKPTRAASLDNQVGDLKLDGLAELQAVTSEMVRLMETATVPILAVDSNGLVNGWNQKVAELTGLRVDEAIGRHILTVVEESSVPVVQRMLYLALQGKEEKEVKFEVKTHGSKRDDGPVILVVNACASRDLHDHVVGVCFVAQDMTVHKLVMDKFTRVEGDYKAIIHNPSPLIPPIFGADEFGWCSEWNAAMTKLTGWHRDEVINKMLLGEVFDSTNASCLVKNKDAFVSLCILINSALAGDETEKAPFSFFDRNGKYIECLLSVNRKVNADGVITGVFCFIQVPSHELQHALHVQQASQQNALTKLKAYSYMRHAINNPLSGMLYSRKALKNTGLNEEQMKEVNVADSCHRQLNKILSDLDQDSVMNKSSCLDLEMVEFVLQDVFVAAVSQVLITCQGKGIRVSCNLPERYMKQTVYGDGVRLQQILSDFLFVSVKFSPVGGSVEISCSLTKNSIGENLHLIDLELRIKHQGKGVPADLLSQMYEDDNKEQSDEGMSLAVSRNLLRLMNGDVRHMREAGMSTFILSVELASAPAK</sequence>
<proteinExistence type="evidence at transcript level"/>
<dbReference type="EMBL" id="AB109891">
    <property type="protein sequence ID" value="BAC76431.1"/>
    <property type="molecule type" value="mRNA"/>
</dbReference>
<dbReference type="EMBL" id="AC147426">
    <property type="protein sequence ID" value="AAT77854.1"/>
    <property type="molecule type" value="Genomic_DNA"/>
</dbReference>
<dbReference type="EMBL" id="AF377946">
    <property type="protein sequence ID" value="AAM47309.1"/>
    <property type="molecule type" value="Genomic_DNA"/>
</dbReference>
<dbReference type="EMBL" id="DP000009">
    <property type="protein sequence ID" value="ABF98580.1"/>
    <property type="molecule type" value="Genomic_DNA"/>
</dbReference>
<dbReference type="EMBL" id="AP008209">
    <property type="protein sequence ID" value="BAF13010.1"/>
    <property type="molecule type" value="Genomic_DNA"/>
</dbReference>
<dbReference type="EMBL" id="AP014959">
    <property type="protein sequence ID" value="BAS86112.1"/>
    <property type="molecule type" value="Genomic_DNA"/>
</dbReference>
<dbReference type="EMBL" id="CM000140">
    <property type="protein sequence ID" value="EAZ28394.1"/>
    <property type="molecule type" value="Genomic_DNA"/>
</dbReference>
<dbReference type="EMBL" id="AK072482">
    <property type="protein sequence ID" value="BAG92990.1"/>
    <property type="molecule type" value="mRNA"/>
</dbReference>
<dbReference type="RefSeq" id="XP_015630340.1">
    <property type="nucleotide sequence ID" value="XM_015774854.1"/>
</dbReference>
<dbReference type="RefSeq" id="XP_015630341.1">
    <property type="nucleotide sequence ID" value="XM_015774855.1"/>
</dbReference>
<dbReference type="SMR" id="Q10DU0"/>
<dbReference type="FunCoup" id="Q10DU0">
    <property type="interactions" value="203"/>
</dbReference>
<dbReference type="STRING" id="39947.Q10DU0"/>
<dbReference type="PaxDb" id="39947-Q10DU0"/>
<dbReference type="EnsemblPlants" id="Os03t0719800-01">
    <property type="protein sequence ID" value="Os03t0719800-01"/>
    <property type="gene ID" value="Os03g0719800"/>
</dbReference>
<dbReference type="Gramene" id="Os03t0719800-01">
    <property type="protein sequence ID" value="Os03t0719800-01"/>
    <property type="gene ID" value="Os03g0719800"/>
</dbReference>
<dbReference type="KEGG" id="dosa:Os03g0719800"/>
<dbReference type="eggNOG" id="ENOG502QRSA">
    <property type="taxonomic scope" value="Eukaryota"/>
</dbReference>
<dbReference type="HOGENOM" id="CLU_010418_0_0_1"/>
<dbReference type="InParanoid" id="Q10DU0"/>
<dbReference type="OMA" id="YLHHIQR"/>
<dbReference type="OrthoDB" id="2015534at2759"/>
<dbReference type="PlantReactome" id="R-OSA-8933811">
    <property type="pathway name" value="Circadian rhythm"/>
</dbReference>
<dbReference type="Proteomes" id="UP000000763">
    <property type="component" value="Chromosome 3"/>
</dbReference>
<dbReference type="Proteomes" id="UP000007752">
    <property type="component" value="Chromosome 3"/>
</dbReference>
<dbReference type="Proteomes" id="UP000059680">
    <property type="component" value="Chromosome 3"/>
</dbReference>
<dbReference type="GO" id="GO:0005634">
    <property type="term" value="C:nucleus"/>
    <property type="evidence" value="ECO:0000318"/>
    <property type="project" value="GO_Central"/>
</dbReference>
<dbReference type="GO" id="GO:0000155">
    <property type="term" value="F:phosphorelay sensor kinase activity"/>
    <property type="evidence" value="ECO:0007669"/>
    <property type="project" value="InterPro"/>
</dbReference>
<dbReference type="GO" id="GO:0009881">
    <property type="term" value="F:photoreceptor activity"/>
    <property type="evidence" value="ECO:0007669"/>
    <property type="project" value="UniProtKB-KW"/>
</dbReference>
<dbReference type="GO" id="GO:0042803">
    <property type="term" value="F:protein homodimerization activity"/>
    <property type="evidence" value="ECO:0007669"/>
    <property type="project" value="InterPro"/>
</dbReference>
<dbReference type="GO" id="GO:0009584">
    <property type="term" value="P:detection of visible light"/>
    <property type="evidence" value="ECO:0007669"/>
    <property type="project" value="InterPro"/>
</dbReference>
<dbReference type="GO" id="GO:0009585">
    <property type="term" value="P:red, far-red light phototransduction"/>
    <property type="evidence" value="ECO:0007669"/>
    <property type="project" value="InterPro"/>
</dbReference>
<dbReference type="GO" id="GO:0006355">
    <property type="term" value="P:regulation of DNA-templated transcription"/>
    <property type="evidence" value="ECO:0007669"/>
    <property type="project" value="InterPro"/>
</dbReference>
<dbReference type="CDD" id="cd00082">
    <property type="entry name" value="HisKA"/>
    <property type="match status" value="1"/>
</dbReference>
<dbReference type="CDD" id="cd00130">
    <property type="entry name" value="PAS"/>
    <property type="match status" value="2"/>
</dbReference>
<dbReference type="FunFam" id="3.30.450.20:FF:000039">
    <property type="entry name" value="Phytochrome"/>
    <property type="match status" value="1"/>
</dbReference>
<dbReference type="FunFam" id="3.30.450.270:FF:000001">
    <property type="entry name" value="Phytochrome"/>
    <property type="match status" value="1"/>
</dbReference>
<dbReference type="Gene3D" id="3.30.450.270">
    <property type="match status" value="1"/>
</dbReference>
<dbReference type="Gene3D" id="3.30.450.40">
    <property type="match status" value="1"/>
</dbReference>
<dbReference type="Gene3D" id="3.30.565.10">
    <property type="entry name" value="Histidine kinase-like ATPase, C-terminal domain"/>
    <property type="match status" value="1"/>
</dbReference>
<dbReference type="Gene3D" id="3.30.450.20">
    <property type="entry name" value="PAS domain"/>
    <property type="match status" value="3"/>
</dbReference>
<dbReference type="InterPro" id="IPR003018">
    <property type="entry name" value="GAF"/>
</dbReference>
<dbReference type="InterPro" id="IPR029016">
    <property type="entry name" value="GAF-like_dom_sf"/>
</dbReference>
<dbReference type="InterPro" id="IPR036890">
    <property type="entry name" value="HATPase_C_sf"/>
</dbReference>
<dbReference type="InterPro" id="IPR005467">
    <property type="entry name" value="His_kinase_dom"/>
</dbReference>
<dbReference type="InterPro" id="IPR003661">
    <property type="entry name" value="HisK_dim/P_dom"/>
</dbReference>
<dbReference type="InterPro" id="IPR000014">
    <property type="entry name" value="PAS"/>
</dbReference>
<dbReference type="InterPro" id="IPR035965">
    <property type="entry name" value="PAS-like_dom_sf"/>
</dbReference>
<dbReference type="InterPro" id="IPR013654">
    <property type="entry name" value="PAS_2"/>
</dbReference>
<dbReference type="InterPro" id="IPR013767">
    <property type="entry name" value="PAS_fold"/>
</dbReference>
<dbReference type="InterPro" id="IPR016132">
    <property type="entry name" value="Phyto_chromo_attachment"/>
</dbReference>
<dbReference type="InterPro" id="IPR013516">
    <property type="entry name" value="Phyto_chromo_BS"/>
</dbReference>
<dbReference type="InterPro" id="IPR001294">
    <property type="entry name" value="Phytochrome"/>
</dbReference>
<dbReference type="InterPro" id="IPR012129">
    <property type="entry name" value="Phytochrome_A-E"/>
</dbReference>
<dbReference type="InterPro" id="IPR013515">
    <property type="entry name" value="Phytochrome_cen-reg"/>
</dbReference>
<dbReference type="InterPro" id="IPR043150">
    <property type="entry name" value="Phytochrome_PHY_sf"/>
</dbReference>
<dbReference type="NCBIfam" id="TIGR00229">
    <property type="entry name" value="sensory_box"/>
    <property type="match status" value="1"/>
</dbReference>
<dbReference type="PANTHER" id="PTHR47876">
    <property type="entry name" value="OS08G0260000 PROTEIN"/>
    <property type="match status" value="1"/>
</dbReference>
<dbReference type="PANTHER" id="PTHR47876:SF3">
    <property type="entry name" value="PHYTOCHROME 1"/>
    <property type="match status" value="1"/>
</dbReference>
<dbReference type="Pfam" id="PF01590">
    <property type="entry name" value="GAF"/>
    <property type="match status" value="1"/>
</dbReference>
<dbReference type="Pfam" id="PF02518">
    <property type="entry name" value="HATPase_c"/>
    <property type="match status" value="1"/>
</dbReference>
<dbReference type="Pfam" id="PF00512">
    <property type="entry name" value="HisKA"/>
    <property type="match status" value="1"/>
</dbReference>
<dbReference type="Pfam" id="PF00989">
    <property type="entry name" value="PAS"/>
    <property type="match status" value="2"/>
</dbReference>
<dbReference type="Pfam" id="PF08446">
    <property type="entry name" value="PAS_2"/>
    <property type="match status" value="1"/>
</dbReference>
<dbReference type="Pfam" id="PF00360">
    <property type="entry name" value="PHY"/>
    <property type="match status" value="1"/>
</dbReference>
<dbReference type="PIRSF" id="PIRSF000084">
    <property type="entry name" value="Phytochrome"/>
    <property type="match status" value="1"/>
</dbReference>
<dbReference type="PRINTS" id="PR01033">
    <property type="entry name" value="PHYTOCHROME"/>
</dbReference>
<dbReference type="SMART" id="SM00065">
    <property type="entry name" value="GAF"/>
    <property type="match status" value="1"/>
</dbReference>
<dbReference type="SMART" id="SM00387">
    <property type="entry name" value="HATPase_c"/>
    <property type="match status" value="1"/>
</dbReference>
<dbReference type="SMART" id="SM00388">
    <property type="entry name" value="HisKA"/>
    <property type="match status" value="1"/>
</dbReference>
<dbReference type="SMART" id="SM00091">
    <property type="entry name" value="PAS"/>
    <property type="match status" value="2"/>
</dbReference>
<dbReference type="SUPFAM" id="SSF55874">
    <property type="entry name" value="ATPase domain of HSP90 chaperone/DNA topoisomerase II/histidine kinase"/>
    <property type="match status" value="1"/>
</dbReference>
<dbReference type="SUPFAM" id="SSF55781">
    <property type="entry name" value="GAF domain-like"/>
    <property type="match status" value="2"/>
</dbReference>
<dbReference type="SUPFAM" id="SSF55785">
    <property type="entry name" value="PYP-like sensor domain (PAS domain)"/>
    <property type="match status" value="3"/>
</dbReference>
<dbReference type="PROSITE" id="PS50109">
    <property type="entry name" value="HIS_KIN"/>
    <property type="match status" value="1"/>
</dbReference>
<dbReference type="PROSITE" id="PS50112">
    <property type="entry name" value="PAS"/>
    <property type="match status" value="2"/>
</dbReference>
<dbReference type="PROSITE" id="PS00245">
    <property type="entry name" value="PHYTOCHROME_1"/>
    <property type="match status" value="1"/>
</dbReference>
<dbReference type="PROSITE" id="PS50046">
    <property type="entry name" value="PHYTOCHROME_2"/>
    <property type="match status" value="1"/>
</dbReference>
<comment type="function">
    <text>Regulatory photoreceptor which exists in two forms that are reversibly interconvertible by light: the Pr form that absorbs maximally in the red region of the spectrum and the Pfr form that absorbs maximally in the far-red region. Photoconversion of Pr to Pfr induces an array of morphogenic responses, whereas reconversion of Pfr to Pr cancels the induction of those responses. Pfr controls the expression of a number of nuclear genes including those encoding the small subunit of ribulose-bisphosphate carboxylase, chlorophyll A/B binding protein, protochlorophyllide reductase, rRNA, etc. It also controls the expression of its own gene(s) in a negative feedback fashion.</text>
</comment>
<comment type="subunit">
    <text>Homodimer.</text>
</comment>
<comment type="PTM">
    <text evidence="1">Contains one covalently linked phytochromobilin chromophore.</text>
</comment>
<comment type="similarity">
    <text evidence="5">Belongs to the phytochrome family.</text>
</comment>
<feature type="chain" id="PRO_0000171977" description="Phytochrome A">
    <location>
        <begin position="1"/>
        <end position="1128"/>
    </location>
</feature>
<feature type="domain" description="GAF">
    <location>
        <begin position="219"/>
        <end position="404"/>
    </location>
</feature>
<feature type="domain" description="PAS 1" evidence="3">
    <location>
        <begin position="620"/>
        <end position="690"/>
    </location>
</feature>
<feature type="domain" description="PAS 2" evidence="3">
    <location>
        <begin position="750"/>
        <end position="834"/>
    </location>
</feature>
<feature type="domain" description="Histidine kinase" evidence="2">
    <location>
        <begin position="904"/>
        <end position="1124"/>
    </location>
</feature>
<feature type="region of interest" description="Disordered" evidence="4">
    <location>
        <begin position="1"/>
        <end position="24"/>
    </location>
</feature>
<feature type="compositionally biased region" description="Low complexity" evidence="4">
    <location>
        <begin position="1"/>
        <end position="21"/>
    </location>
</feature>
<feature type="binding site" description="covalent" evidence="1">
    <location>
        <position position="324"/>
    </location>
    <ligand>
        <name>phytochromobilin</name>
        <dbReference type="ChEBI" id="CHEBI:189064"/>
    </ligand>
</feature>
<protein>
    <recommendedName>
        <fullName>Phytochrome A</fullName>
    </recommendedName>
</protein>
<organism>
    <name type="scientific">Oryza sativa subsp. japonica</name>
    <name type="common">Rice</name>
    <dbReference type="NCBI Taxonomy" id="39947"/>
    <lineage>
        <taxon>Eukaryota</taxon>
        <taxon>Viridiplantae</taxon>
        <taxon>Streptophyta</taxon>
        <taxon>Embryophyta</taxon>
        <taxon>Tracheophyta</taxon>
        <taxon>Spermatophyta</taxon>
        <taxon>Magnoliopsida</taxon>
        <taxon>Liliopsida</taxon>
        <taxon>Poales</taxon>
        <taxon>Poaceae</taxon>
        <taxon>BOP clade</taxon>
        <taxon>Oryzoideae</taxon>
        <taxon>Oryzeae</taxon>
        <taxon>Oryzinae</taxon>
        <taxon>Oryza</taxon>
        <taxon>Oryza sativa</taxon>
    </lineage>
</organism>
<reference key="1">
    <citation type="journal article" date="2005" name="Plant Cell">
        <title>Distinct and cooperative functions of phytochromes a, B, and C in the control of deetiolation and flowering in rice.</title>
        <authorList>
            <person name="Takano M."/>
            <person name="Inagaki N."/>
            <person name="Xie X."/>
            <person name="Yuzurihara N."/>
            <person name="Hihara F."/>
            <person name="Ishizuka T."/>
            <person name="Yano M."/>
            <person name="Nishimura M."/>
            <person name="Miyao A."/>
            <person name="Hirochika H."/>
            <person name="Shinomura T."/>
        </authorList>
    </citation>
    <scope>NUCLEOTIDE SEQUENCE [MRNA]</scope>
    <source>
        <strain>cv. Nipponbare</strain>
        <tissue>Etiolated seedling</tissue>
    </source>
</reference>
<reference key="2">
    <citation type="journal article" date="2005" name="Genome Res.">
        <title>Sequence, annotation, and analysis of synteny between rice chromosome 3 and diverged grass species.</title>
        <authorList>
            <consortium name="The rice chromosome 3 sequencing consortium"/>
            <person name="Buell C.R."/>
            <person name="Yuan Q."/>
            <person name="Ouyang S."/>
            <person name="Liu J."/>
            <person name="Zhu W."/>
            <person name="Wang A."/>
            <person name="Maiti R."/>
            <person name="Haas B."/>
            <person name="Wortman J."/>
            <person name="Pertea M."/>
            <person name="Jones K.M."/>
            <person name="Kim M."/>
            <person name="Overton L."/>
            <person name="Tsitrin T."/>
            <person name="Fadrosh D."/>
            <person name="Bera J."/>
            <person name="Weaver B."/>
            <person name="Jin S."/>
            <person name="Johri S."/>
            <person name="Reardon M."/>
            <person name="Webb K."/>
            <person name="Hill J."/>
            <person name="Moffat K."/>
            <person name="Tallon L."/>
            <person name="Van Aken S."/>
            <person name="Lewis M."/>
            <person name="Utterback T."/>
            <person name="Feldblyum T."/>
            <person name="Zismann V."/>
            <person name="Iobst S."/>
            <person name="Hsiao J."/>
            <person name="de Vazeille A.R."/>
            <person name="Salzberg S.L."/>
            <person name="White O."/>
            <person name="Fraser C.M."/>
            <person name="Yu Y."/>
            <person name="Kim H."/>
            <person name="Rambo T."/>
            <person name="Currie J."/>
            <person name="Collura K."/>
            <person name="Kernodle-Thompson S."/>
            <person name="Wei F."/>
            <person name="Kudrna K."/>
            <person name="Ammiraju J.S.S."/>
            <person name="Luo M."/>
            <person name="Goicoechea J.L."/>
            <person name="Wing R.A."/>
            <person name="Henry D."/>
            <person name="Oates R."/>
            <person name="Palmer M."/>
            <person name="Pries G."/>
            <person name="Saski C."/>
            <person name="Simmons J."/>
            <person name="Soderlund C."/>
            <person name="Nelson W."/>
            <person name="de la Bastide M."/>
            <person name="Spiegel L."/>
            <person name="Nascimento L."/>
            <person name="Huang E."/>
            <person name="Preston R."/>
            <person name="Zutavern T."/>
            <person name="Palmer L."/>
            <person name="O'Shaughnessy A."/>
            <person name="Dike S."/>
            <person name="McCombie W.R."/>
            <person name="Minx P."/>
            <person name="Cordum H."/>
            <person name="Wilson R."/>
            <person name="Jin W."/>
            <person name="Lee H.R."/>
            <person name="Jiang J."/>
            <person name="Jackson S."/>
        </authorList>
    </citation>
    <scope>NUCLEOTIDE SEQUENCE [LARGE SCALE GENOMIC DNA]</scope>
    <source>
        <strain>cv. Nipponbare</strain>
    </source>
</reference>
<reference key="3">
    <citation type="journal article" date="2005" name="Nature">
        <title>The map-based sequence of the rice genome.</title>
        <authorList>
            <consortium name="International rice genome sequencing project (IRGSP)"/>
        </authorList>
    </citation>
    <scope>NUCLEOTIDE SEQUENCE [LARGE SCALE GENOMIC DNA]</scope>
    <source>
        <strain>cv. Nipponbare</strain>
    </source>
</reference>
<reference key="4">
    <citation type="journal article" date="2008" name="Nucleic Acids Res.">
        <title>The rice annotation project database (RAP-DB): 2008 update.</title>
        <authorList>
            <consortium name="The rice annotation project (RAP)"/>
        </authorList>
    </citation>
    <scope>GENOME REANNOTATION</scope>
    <source>
        <strain>cv. Nipponbare</strain>
    </source>
</reference>
<reference key="5">
    <citation type="journal article" date="2013" name="Rice">
        <title>Improvement of the Oryza sativa Nipponbare reference genome using next generation sequence and optical map data.</title>
        <authorList>
            <person name="Kawahara Y."/>
            <person name="de la Bastide M."/>
            <person name="Hamilton J.P."/>
            <person name="Kanamori H."/>
            <person name="McCombie W.R."/>
            <person name="Ouyang S."/>
            <person name="Schwartz D.C."/>
            <person name="Tanaka T."/>
            <person name="Wu J."/>
            <person name="Zhou S."/>
            <person name="Childs K.L."/>
            <person name="Davidson R.M."/>
            <person name="Lin H."/>
            <person name="Quesada-Ocampo L."/>
            <person name="Vaillancourt B."/>
            <person name="Sakai H."/>
            <person name="Lee S.S."/>
            <person name="Kim J."/>
            <person name="Numa H."/>
            <person name="Itoh T."/>
            <person name="Buell C.R."/>
            <person name="Matsumoto T."/>
        </authorList>
    </citation>
    <scope>GENOME REANNOTATION</scope>
    <source>
        <strain>cv. Nipponbare</strain>
    </source>
</reference>
<reference key="6">
    <citation type="journal article" date="2005" name="PLoS Biol.">
        <title>The genomes of Oryza sativa: a history of duplications.</title>
        <authorList>
            <person name="Yu J."/>
            <person name="Wang J."/>
            <person name="Lin W."/>
            <person name="Li S."/>
            <person name="Li H."/>
            <person name="Zhou J."/>
            <person name="Ni P."/>
            <person name="Dong W."/>
            <person name="Hu S."/>
            <person name="Zeng C."/>
            <person name="Zhang J."/>
            <person name="Zhang Y."/>
            <person name="Li R."/>
            <person name="Xu Z."/>
            <person name="Li S."/>
            <person name="Li X."/>
            <person name="Zheng H."/>
            <person name="Cong L."/>
            <person name="Lin L."/>
            <person name="Yin J."/>
            <person name="Geng J."/>
            <person name="Li G."/>
            <person name="Shi J."/>
            <person name="Liu J."/>
            <person name="Lv H."/>
            <person name="Li J."/>
            <person name="Wang J."/>
            <person name="Deng Y."/>
            <person name="Ran L."/>
            <person name="Shi X."/>
            <person name="Wang X."/>
            <person name="Wu Q."/>
            <person name="Li C."/>
            <person name="Ren X."/>
            <person name="Wang J."/>
            <person name="Wang X."/>
            <person name="Li D."/>
            <person name="Liu D."/>
            <person name="Zhang X."/>
            <person name="Ji Z."/>
            <person name="Zhao W."/>
            <person name="Sun Y."/>
            <person name="Zhang Z."/>
            <person name="Bao J."/>
            <person name="Han Y."/>
            <person name="Dong L."/>
            <person name="Ji J."/>
            <person name="Chen P."/>
            <person name="Wu S."/>
            <person name="Liu J."/>
            <person name="Xiao Y."/>
            <person name="Bu D."/>
            <person name="Tan J."/>
            <person name="Yang L."/>
            <person name="Ye C."/>
            <person name="Zhang J."/>
            <person name="Xu J."/>
            <person name="Zhou Y."/>
            <person name="Yu Y."/>
            <person name="Zhang B."/>
            <person name="Zhuang S."/>
            <person name="Wei H."/>
            <person name="Liu B."/>
            <person name="Lei M."/>
            <person name="Yu H."/>
            <person name="Li Y."/>
            <person name="Xu H."/>
            <person name="Wei S."/>
            <person name="He X."/>
            <person name="Fang L."/>
            <person name="Zhang Z."/>
            <person name="Zhang Y."/>
            <person name="Huang X."/>
            <person name="Su Z."/>
            <person name="Tong W."/>
            <person name="Li J."/>
            <person name="Tong Z."/>
            <person name="Li S."/>
            <person name="Ye J."/>
            <person name="Wang L."/>
            <person name="Fang L."/>
            <person name="Lei T."/>
            <person name="Chen C.-S."/>
            <person name="Chen H.-C."/>
            <person name="Xu Z."/>
            <person name="Li H."/>
            <person name="Huang H."/>
            <person name="Zhang F."/>
            <person name="Xu H."/>
            <person name="Li N."/>
            <person name="Zhao C."/>
            <person name="Li S."/>
            <person name="Dong L."/>
            <person name="Huang Y."/>
            <person name="Li L."/>
            <person name="Xi Y."/>
            <person name="Qi Q."/>
            <person name="Li W."/>
            <person name="Zhang B."/>
            <person name="Hu W."/>
            <person name="Zhang Y."/>
            <person name="Tian X."/>
            <person name="Jiao Y."/>
            <person name="Liang X."/>
            <person name="Jin J."/>
            <person name="Gao L."/>
            <person name="Zheng W."/>
            <person name="Hao B."/>
            <person name="Liu S.-M."/>
            <person name="Wang W."/>
            <person name="Yuan L."/>
            <person name="Cao M."/>
            <person name="McDermott J."/>
            <person name="Samudrala R."/>
            <person name="Wang J."/>
            <person name="Wong G.K.-S."/>
            <person name="Yang H."/>
        </authorList>
    </citation>
    <scope>NUCLEOTIDE SEQUENCE [LARGE SCALE GENOMIC DNA]</scope>
    <source>
        <strain>cv. Nipponbare</strain>
    </source>
</reference>
<reference key="7">
    <citation type="journal article" date="2003" name="Science">
        <title>Collection, mapping, and annotation of over 28,000 cDNA clones from japonica rice.</title>
        <authorList>
            <consortium name="The rice full-length cDNA consortium"/>
        </authorList>
    </citation>
    <scope>NUCLEOTIDE SEQUENCE [LARGE SCALE MRNA]</scope>
    <source>
        <strain>cv. Nipponbare</strain>
    </source>
</reference>
<reference key="8">
    <citation type="journal article" date="1992" name="Genes Dev.">
        <title>Serine-to-alanine substitutions at the amino-terminal region of phytochrome A result in an increase in biological activity.</title>
        <authorList>
            <person name="Stockhaus J."/>
            <person name="Nagatani A."/>
            <person name="Halfter U."/>
            <person name="Kay S."/>
            <person name="Furuya M."/>
            <person name="Chua N.-H."/>
        </authorList>
    </citation>
    <scope>MUTAGENESIS OF N-TERMINAL SERINES</scope>
</reference>
<accession>Q10DU0</accession>
<accession>B7EKU3</accession>
<accession>P10931</accession>
<accession>Q8LLN7</accession>